<keyword id="KW-0007">Acetylation</keyword>
<keyword id="KW-0249">Electron transport</keyword>
<keyword id="KW-0472">Membrane</keyword>
<keyword id="KW-0496">Mitochondrion</keyword>
<keyword id="KW-0999">Mitochondrion inner membrane</keyword>
<keyword id="KW-0597">Phosphoprotein</keyword>
<keyword id="KW-1185">Reference proteome</keyword>
<keyword id="KW-0679">Respiratory chain</keyword>
<keyword id="KW-0812">Transmembrane</keyword>
<keyword id="KW-1133">Transmembrane helix</keyword>
<keyword id="KW-0813">Transport</keyword>
<comment type="function">
    <text evidence="1">Proposed subunit of cytochrome c oxidase (COX, complex IV), which is the terminal component of the mitochondrial respiratory chain that catalyzes the reduction of oxygen to water. May play a role in the assembly of respiratory supercomplexes (By similarity).</text>
</comment>
<comment type="subunit">
    <text evidence="1">Associates with cytochrome c oxidase (COX, complex IV); proposed complex component. Also associates with respiratory chain supercomplexes (By similarity).</text>
</comment>
<comment type="subcellular location">
    <subcellularLocation>
        <location evidence="4">Mitochondrion membrane</location>
        <topology evidence="4">Multi-pass membrane protein</topology>
    </subcellularLocation>
    <subcellularLocation>
        <location evidence="1">Mitochondrion inner membrane</location>
    </subcellularLocation>
</comment>
<comment type="tissue specificity">
    <text evidence="5">Expressed in brain and spinal cord.</text>
</comment>
<comment type="developmental stage">
    <text evidence="5">Expression is increased between P1 and P15 in the spinal cord and a differential spatial pattern. In the P1 spinal cord there is a preferential expression in regions of dorsal laminae II and III and laminae IX ventrally; while in P8, the distribution is more widespread and overall expression is increased.</text>
</comment>
<reference key="1">
    <citation type="journal article" date="2005" name="Int. J. Dev. Biol.">
        <title>Characterization of hypoxia induced gene 1: expression during rat central nervous system maturation and evidence of antisense RNA expression.</title>
        <authorList>
            <person name="Bedo G.R."/>
            <person name="Vargas M."/>
            <person name="Ferreiro M.J."/>
            <person name="Chalar C."/>
            <person name="Agrati D."/>
        </authorList>
    </citation>
    <scope>NUCLEOTIDE SEQUENCE [MRNA]</scope>
    <scope>DEVELOPMENTAL STAGE</scope>
    <scope>TISSUE SPECIFICITY</scope>
    <source>
        <strain>Sprague-Dawley</strain>
        <tissue>Spinal cord</tissue>
    </source>
</reference>
<reference key="2">
    <citation type="submission" date="2007-02" db="EMBL/GenBank/DDBJ databases">
        <authorList>
            <person name="Vargas M."/>
            <person name="Bedo G."/>
        </authorList>
    </citation>
    <scope>SEQUENCE REVISION TO 8</scope>
    <source>
        <strain>Sprague-Dawley</strain>
        <tissue>Spinal cord</tissue>
    </source>
</reference>
<reference key="3">
    <citation type="journal article" date="2004" name="Genome Res.">
        <title>The status, quality, and expansion of the NIH full-length cDNA project: the Mammalian Gene Collection (MGC).</title>
        <authorList>
            <consortium name="The MGC Project Team"/>
        </authorList>
    </citation>
    <scope>NUCLEOTIDE SEQUENCE [LARGE SCALE MRNA]</scope>
    <source>
        <tissue>Pituitary</tissue>
    </source>
</reference>
<reference key="4">
    <citation type="journal article" date="2012" name="Nat. Commun.">
        <title>Quantitative maps of protein phosphorylation sites across 14 different rat organs and tissues.</title>
        <authorList>
            <person name="Lundby A."/>
            <person name="Secher A."/>
            <person name="Lage K."/>
            <person name="Nordsborg N.B."/>
            <person name="Dmytriyev A."/>
            <person name="Lundby C."/>
            <person name="Olsen J.V."/>
        </authorList>
    </citation>
    <scope>PHOSPHORYLATION [LARGE SCALE ANALYSIS] AT SER-8</scope>
    <scope>IDENTIFICATION BY MASS SPECTROMETRY [LARGE SCALE ANALYSIS]</scope>
</reference>
<dbReference type="EMBL" id="AY062253">
    <property type="protein sequence ID" value="AAL38979.2"/>
    <property type="molecule type" value="mRNA"/>
</dbReference>
<dbReference type="EMBL" id="BC059118">
    <property type="protein sequence ID" value="AAH59118.1"/>
    <property type="molecule type" value="mRNA"/>
</dbReference>
<dbReference type="RefSeq" id="NP_543178.2">
    <property type="nucleotide sequence ID" value="NM_080902.4"/>
</dbReference>
<dbReference type="SMR" id="Q8VH49"/>
<dbReference type="FunCoup" id="Q8VH49">
    <property type="interactions" value="373"/>
</dbReference>
<dbReference type="STRING" id="10116.ENSRNOP00000061362"/>
<dbReference type="iPTMnet" id="Q8VH49"/>
<dbReference type="PhosphoSitePlus" id="Q8VH49"/>
<dbReference type="PaxDb" id="10116-ENSRNOP00000061362"/>
<dbReference type="Ensembl" id="ENSRNOT00000064114.4">
    <property type="protein sequence ID" value="ENSRNOP00000061362.1"/>
    <property type="gene ID" value="ENSRNOG00000019428.8"/>
</dbReference>
<dbReference type="GeneID" id="140937"/>
<dbReference type="KEGG" id="rno:140937"/>
<dbReference type="UCSC" id="RGD:620215">
    <property type="organism name" value="rat"/>
</dbReference>
<dbReference type="AGR" id="RGD:620215"/>
<dbReference type="CTD" id="25994"/>
<dbReference type="RGD" id="620215">
    <property type="gene designation" value="Higd1a"/>
</dbReference>
<dbReference type="eggNOG" id="KOG4431">
    <property type="taxonomic scope" value="Eukaryota"/>
</dbReference>
<dbReference type="GeneTree" id="ENSGT00940000154276"/>
<dbReference type="HOGENOM" id="CLU_153308_2_0_1"/>
<dbReference type="InParanoid" id="Q8VH49"/>
<dbReference type="OMA" id="DQGEAPC"/>
<dbReference type="OrthoDB" id="6018at9989"/>
<dbReference type="PhylomeDB" id="Q8VH49"/>
<dbReference type="PRO" id="PR:Q8VH49"/>
<dbReference type="Proteomes" id="UP000002494">
    <property type="component" value="Chromosome 8"/>
</dbReference>
<dbReference type="Bgee" id="ENSRNOG00000019428">
    <property type="expression patterns" value="Expressed in duodenum and 20 other cell types or tissues"/>
</dbReference>
<dbReference type="GO" id="GO:0016020">
    <property type="term" value="C:membrane"/>
    <property type="evidence" value="ECO:0000266"/>
    <property type="project" value="RGD"/>
</dbReference>
<dbReference type="GO" id="GO:0005743">
    <property type="term" value="C:mitochondrial inner membrane"/>
    <property type="evidence" value="ECO:0000266"/>
    <property type="project" value="RGD"/>
</dbReference>
<dbReference type="GO" id="GO:0005739">
    <property type="term" value="C:mitochondrion"/>
    <property type="evidence" value="ECO:0000266"/>
    <property type="project" value="RGD"/>
</dbReference>
<dbReference type="GO" id="GO:0005634">
    <property type="term" value="C:nucleus"/>
    <property type="evidence" value="ECO:0000266"/>
    <property type="project" value="RGD"/>
</dbReference>
<dbReference type="GO" id="GO:0042149">
    <property type="term" value="P:cellular response to glucose starvation"/>
    <property type="evidence" value="ECO:0000266"/>
    <property type="project" value="RGD"/>
</dbReference>
<dbReference type="GO" id="GO:0071456">
    <property type="term" value="P:cellular response to hypoxia"/>
    <property type="evidence" value="ECO:0000266"/>
    <property type="project" value="RGD"/>
</dbReference>
<dbReference type="GO" id="GO:0097250">
    <property type="term" value="P:mitochondrial respirasome assembly"/>
    <property type="evidence" value="ECO:0000318"/>
    <property type="project" value="GO_Central"/>
</dbReference>
<dbReference type="GO" id="GO:0043066">
    <property type="term" value="P:negative regulation of apoptotic process"/>
    <property type="evidence" value="ECO:0000266"/>
    <property type="project" value="RGD"/>
</dbReference>
<dbReference type="GO" id="GO:0090201">
    <property type="term" value="P:negative regulation of release of cytochrome c from mitochondria"/>
    <property type="evidence" value="ECO:0000266"/>
    <property type="project" value="RGD"/>
</dbReference>
<dbReference type="Gene3D" id="6.10.140.1320">
    <property type="match status" value="1"/>
</dbReference>
<dbReference type="InterPro" id="IPR007667">
    <property type="entry name" value="Hypoxia_induced_domain"/>
</dbReference>
<dbReference type="InterPro" id="IPR050355">
    <property type="entry name" value="RCF1"/>
</dbReference>
<dbReference type="PANTHER" id="PTHR12297:SF5">
    <property type="entry name" value="HIG1 DOMAIN FAMILY MEMBER 1A, MITOCHONDRIAL"/>
    <property type="match status" value="1"/>
</dbReference>
<dbReference type="PANTHER" id="PTHR12297">
    <property type="entry name" value="HYPOXIA-INDUCBILE GENE 1 HIG1 -RELATED"/>
    <property type="match status" value="1"/>
</dbReference>
<dbReference type="Pfam" id="PF04588">
    <property type="entry name" value="HIG_1_N"/>
    <property type="match status" value="1"/>
</dbReference>
<dbReference type="PROSITE" id="PS51503">
    <property type="entry name" value="HIG1"/>
    <property type="match status" value="1"/>
</dbReference>
<proteinExistence type="evidence at protein level"/>
<protein>
    <recommendedName>
        <fullName>HIG1 domain family member 1A, mitochondrial</fullName>
    </recommendedName>
    <alternativeName>
        <fullName>Hypoxia-inducible gene 1 protein</fullName>
    </alternativeName>
</protein>
<name>HIG1A_RAT</name>
<gene>
    <name type="primary">Higd1a</name>
    <name type="synonym">Hig1</name>
</gene>
<organism>
    <name type="scientific">Rattus norvegicus</name>
    <name type="common">Rat</name>
    <dbReference type="NCBI Taxonomy" id="10116"/>
    <lineage>
        <taxon>Eukaryota</taxon>
        <taxon>Metazoa</taxon>
        <taxon>Chordata</taxon>
        <taxon>Craniata</taxon>
        <taxon>Vertebrata</taxon>
        <taxon>Euteleostomi</taxon>
        <taxon>Mammalia</taxon>
        <taxon>Eutheria</taxon>
        <taxon>Euarchontoglires</taxon>
        <taxon>Glires</taxon>
        <taxon>Rodentia</taxon>
        <taxon>Myomorpha</taxon>
        <taxon>Muroidea</taxon>
        <taxon>Muridae</taxon>
        <taxon>Murinae</taxon>
        <taxon>Rattus</taxon>
    </lineage>
</organism>
<feature type="initiator methionine" description="Removed" evidence="2">
    <location>
        <position position="1"/>
    </location>
</feature>
<feature type="chain" id="PRO_0000215773" description="HIG1 domain family member 1A, mitochondrial">
    <location>
        <begin position="2"/>
        <end position="93"/>
    </location>
</feature>
<feature type="transmembrane region" description="Helical" evidence="4">
    <location>
        <begin position="28"/>
        <end position="48"/>
    </location>
</feature>
<feature type="transmembrane region" description="Helical" evidence="4">
    <location>
        <begin position="69"/>
        <end position="89"/>
    </location>
</feature>
<feature type="topological domain" description="Mitochondrial matrix" evidence="3">
    <location>
        <begin position="90"/>
        <end position="93"/>
    </location>
</feature>
<feature type="domain" description="HIG1" evidence="4">
    <location>
        <begin position="2"/>
        <end position="93"/>
    </location>
</feature>
<feature type="modified residue" description="N-acetylserine" evidence="2">
    <location>
        <position position="2"/>
    </location>
</feature>
<feature type="modified residue" description="Phosphoserine" evidence="6">
    <location>
        <position position="8"/>
    </location>
</feature>
<sequence>MSTNTDLSLSSYDEGQGSKFIRKARETPFVPIGMAGFAAIVAYGLYKLKSRGNTKMSIHLIHMRVAAQGFVVGAMTLGMGYSMYQEFWAKRKP</sequence>
<evidence type="ECO:0000250" key="1"/>
<evidence type="ECO:0000250" key="2">
    <source>
        <dbReference type="UniProtKB" id="Q9Y241"/>
    </source>
</evidence>
<evidence type="ECO:0000255" key="3"/>
<evidence type="ECO:0000255" key="4">
    <source>
        <dbReference type="PROSITE-ProRule" id="PRU00836"/>
    </source>
</evidence>
<evidence type="ECO:0000269" key="5">
    <source>
    </source>
</evidence>
<evidence type="ECO:0007744" key="6">
    <source>
    </source>
</evidence>
<accession>Q8VH49</accession>
<accession>Q6PCV5</accession>